<protein>
    <recommendedName>
        <fullName>Cornifelin</fullName>
    </recommendedName>
</protein>
<feature type="chain" id="PRO_0000261194" description="Cornifelin">
    <location>
        <begin position="1"/>
        <end position="111"/>
    </location>
</feature>
<gene>
    <name type="primary">CNFN</name>
</gene>
<name>CNFN_BOVIN</name>
<accession>Q0VBW2</accession>
<reference key="1">
    <citation type="submission" date="2006-08" db="EMBL/GenBank/DDBJ databases">
        <authorList>
            <consortium name="NIH - Mammalian Gene Collection (MGC) project"/>
        </authorList>
    </citation>
    <scope>NUCLEOTIDE SEQUENCE [LARGE SCALE MRNA]</scope>
    <source>
        <strain>Hereford</strain>
        <tissue>Fetal skin</tissue>
    </source>
</reference>
<sequence length="111" mass="12313">MSYPVTSQPQSASTCYQTQLSDWHTGLTDCCNDMPVCLCGTFAPLCLACRISDDFGECCCTPYLPGGLHSLRTGMRERYRIQGSIGKDWAALTFCLPCALCQMARELKIRE</sequence>
<organism>
    <name type="scientific">Bos taurus</name>
    <name type="common">Bovine</name>
    <dbReference type="NCBI Taxonomy" id="9913"/>
    <lineage>
        <taxon>Eukaryota</taxon>
        <taxon>Metazoa</taxon>
        <taxon>Chordata</taxon>
        <taxon>Craniata</taxon>
        <taxon>Vertebrata</taxon>
        <taxon>Euteleostomi</taxon>
        <taxon>Mammalia</taxon>
        <taxon>Eutheria</taxon>
        <taxon>Laurasiatheria</taxon>
        <taxon>Artiodactyla</taxon>
        <taxon>Ruminantia</taxon>
        <taxon>Pecora</taxon>
        <taxon>Bovidae</taxon>
        <taxon>Bovinae</taxon>
        <taxon>Bos</taxon>
    </lineage>
</organism>
<evidence type="ECO:0000250" key="1"/>
<evidence type="ECO:0000305" key="2"/>
<keyword id="KW-0963">Cytoplasm</keyword>
<keyword id="KW-0417">Keratinization</keyword>
<keyword id="KW-1185">Reference proteome</keyword>
<dbReference type="EMBL" id="BC120481">
    <property type="protein sequence ID" value="AAI20482.1"/>
    <property type="molecule type" value="mRNA"/>
</dbReference>
<dbReference type="RefSeq" id="NP_001069010.1">
    <property type="nucleotide sequence ID" value="NM_001075542.1"/>
</dbReference>
<dbReference type="RefSeq" id="XP_005219294.1">
    <property type="nucleotide sequence ID" value="XM_005219237.4"/>
</dbReference>
<dbReference type="FunCoup" id="Q0VBW2">
    <property type="interactions" value="22"/>
</dbReference>
<dbReference type="STRING" id="9913.ENSBTAP00000041423"/>
<dbReference type="PaxDb" id="9913-ENSBTAP00000041423"/>
<dbReference type="GeneID" id="511870"/>
<dbReference type="KEGG" id="bta:511870"/>
<dbReference type="CTD" id="84518"/>
<dbReference type="eggNOG" id="ENOG502S8N3">
    <property type="taxonomic scope" value="Eukaryota"/>
</dbReference>
<dbReference type="HOGENOM" id="CLU_083147_5_2_1"/>
<dbReference type="InParanoid" id="Q0VBW2"/>
<dbReference type="OrthoDB" id="1045822at2759"/>
<dbReference type="TreeFam" id="TF330308"/>
<dbReference type="Proteomes" id="UP000009136">
    <property type="component" value="Unplaced"/>
</dbReference>
<dbReference type="GO" id="GO:0001533">
    <property type="term" value="C:cornified envelope"/>
    <property type="evidence" value="ECO:0000318"/>
    <property type="project" value="GO_Central"/>
</dbReference>
<dbReference type="GO" id="GO:0005737">
    <property type="term" value="C:cytoplasm"/>
    <property type="evidence" value="ECO:0007669"/>
    <property type="project" value="UniProtKB-SubCell"/>
</dbReference>
<dbReference type="GO" id="GO:0031424">
    <property type="term" value="P:keratinization"/>
    <property type="evidence" value="ECO:0007669"/>
    <property type="project" value="UniProtKB-KW"/>
</dbReference>
<dbReference type="InterPro" id="IPR006461">
    <property type="entry name" value="PLAC_motif_containing"/>
</dbReference>
<dbReference type="NCBIfam" id="TIGR01571">
    <property type="entry name" value="A_thal_Cys_rich"/>
    <property type="match status" value="1"/>
</dbReference>
<dbReference type="PANTHER" id="PTHR15907">
    <property type="entry name" value="DUF614 FAMILY PROTEIN-RELATED"/>
    <property type="match status" value="1"/>
</dbReference>
<dbReference type="Pfam" id="PF04749">
    <property type="entry name" value="PLAC8"/>
    <property type="match status" value="1"/>
</dbReference>
<comment type="function">
    <text>Part of the insoluble cornified cell envelope (CE) of stratified squamous epithelia.</text>
</comment>
<comment type="subunit">
    <text evidence="1">Directly or indirectly cross-linked to CE proteins loricin and involucrin (IVL).</text>
</comment>
<comment type="subcellular location">
    <subcellularLocation>
        <location>Cytoplasm</location>
    </subcellularLocation>
    <text evidence="1">Constituent of the scaffolding of the cornified envelope.</text>
</comment>
<comment type="similarity">
    <text evidence="2">Belongs to the cornifelin family.</text>
</comment>
<proteinExistence type="inferred from homology"/>